<gene>
    <name type="primary">GLN1</name>
    <name type="synonym">GLN</name>
</gene>
<accession>Q12613</accession>
<feature type="chain" id="PRO_0000153153" description="Glutamine synthetase">
    <location>
        <begin position="1"/>
        <end position="360"/>
    </location>
</feature>
<feature type="domain" description="GS beta-grasp" evidence="2">
    <location>
        <begin position="26"/>
        <end position="105"/>
    </location>
</feature>
<feature type="domain" description="GS catalytic" evidence="3">
    <location>
        <begin position="112"/>
        <end position="360"/>
    </location>
</feature>
<name>GLNA_COLGL</name>
<comment type="catalytic activity">
    <reaction>
        <text>L-glutamate + NH4(+) + ATP = L-glutamine + ADP + phosphate + H(+)</text>
        <dbReference type="Rhea" id="RHEA:16169"/>
        <dbReference type="ChEBI" id="CHEBI:15378"/>
        <dbReference type="ChEBI" id="CHEBI:28938"/>
        <dbReference type="ChEBI" id="CHEBI:29985"/>
        <dbReference type="ChEBI" id="CHEBI:30616"/>
        <dbReference type="ChEBI" id="CHEBI:43474"/>
        <dbReference type="ChEBI" id="CHEBI:58359"/>
        <dbReference type="ChEBI" id="CHEBI:456216"/>
        <dbReference type="EC" id="6.3.1.2"/>
    </reaction>
</comment>
<comment type="subunit">
    <text evidence="1">Homooctamer.</text>
</comment>
<comment type="subcellular location">
    <subcellularLocation>
        <location evidence="1">Cytoplasm</location>
    </subcellularLocation>
</comment>
<comment type="similarity">
    <text evidence="4">Belongs to the glutamine synthetase family.</text>
</comment>
<dbReference type="EC" id="6.3.1.2"/>
<dbReference type="EMBL" id="L78067">
    <property type="protein sequence ID" value="AAB00322.1"/>
    <property type="molecule type" value="Genomic_DNA"/>
</dbReference>
<dbReference type="SMR" id="Q12613"/>
<dbReference type="GO" id="GO:0005737">
    <property type="term" value="C:cytoplasm"/>
    <property type="evidence" value="ECO:0007669"/>
    <property type="project" value="UniProtKB-SubCell"/>
</dbReference>
<dbReference type="GO" id="GO:0005524">
    <property type="term" value="F:ATP binding"/>
    <property type="evidence" value="ECO:0007669"/>
    <property type="project" value="UniProtKB-KW"/>
</dbReference>
<dbReference type="GO" id="GO:0004356">
    <property type="term" value="F:glutamine synthetase activity"/>
    <property type="evidence" value="ECO:0007669"/>
    <property type="project" value="UniProtKB-EC"/>
</dbReference>
<dbReference type="GO" id="GO:0006542">
    <property type="term" value="P:glutamine biosynthetic process"/>
    <property type="evidence" value="ECO:0007669"/>
    <property type="project" value="InterPro"/>
</dbReference>
<dbReference type="FunFam" id="3.10.20.70:FF:000004">
    <property type="entry name" value="Glutamine synthetase"/>
    <property type="match status" value="1"/>
</dbReference>
<dbReference type="FunFam" id="3.30.590.10:FF:000004">
    <property type="entry name" value="Glutamine synthetase"/>
    <property type="match status" value="1"/>
</dbReference>
<dbReference type="Gene3D" id="3.10.20.70">
    <property type="entry name" value="Glutamine synthetase, N-terminal domain"/>
    <property type="match status" value="1"/>
</dbReference>
<dbReference type="Gene3D" id="3.30.590.10">
    <property type="entry name" value="Glutamine synthetase/guanido kinase, catalytic domain"/>
    <property type="match status" value="1"/>
</dbReference>
<dbReference type="InterPro" id="IPR008147">
    <property type="entry name" value="Gln_synt_N"/>
</dbReference>
<dbReference type="InterPro" id="IPR036651">
    <property type="entry name" value="Gln_synt_N_sf"/>
</dbReference>
<dbReference type="InterPro" id="IPR014746">
    <property type="entry name" value="Gln_synth/guanido_kin_cat_dom"/>
</dbReference>
<dbReference type="InterPro" id="IPR008146">
    <property type="entry name" value="Gln_synth_cat_dom"/>
</dbReference>
<dbReference type="InterPro" id="IPR027303">
    <property type="entry name" value="Gln_synth_gly_rich_site"/>
</dbReference>
<dbReference type="InterPro" id="IPR027302">
    <property type="entry name" value="Gln_synth_N_conserv_site"/>
</dbReference>
<dbReference type="InterPro" id="IPR050292">
    <property type="entry name" value="Glutamine_Synthetase"/>
</dbReference>
<dbReference type="PANTHER" id="PTHR20852">
    <property type="entry name" value="GLUTAMINE SYNTHETASE"/>
    <property type="match status" value="1"/>
</dbReference>
<dbReference type="PANTHER" id="PTHR20852:SF57">
    <property type="entry name" value="GLUTAMINE SYNTHETASE 2 CYTOPLASMIC"/>
    <property type="match status" value="1"/>
</dbReference>
<dbReference type="Pfam" id="PF00120">
    <property type="entry name" value="Gln-synt_C"/>
    <property type="match status" value="1"/>
</dbReference>
<dbReference type="Pfam" id="PF03951">
    <property type="entry name" value="Gln-synt_N"/>
    <property type="match status" value="1"/>
</dbReference>
<dbReference type="SMART" id="SM01230">
    <property type="entry name" value="Gln-synt_C"/>
    <property type="match status" value="1"/>
</dbReference>
<dbReference type="SUPFAM" id="SSF54368">
    <property type="entry name" value="Glutamine synthetase, N-terminal domain"/>
    <property type="match status" value="1"/>
</dbReference>
<dbReference type="SUPFAM" id="SSF55931">
    <property type="entry name" value="Glutamine synthetase/guanido kinase"/>
    <property type="match status" value="1"/>
</dbReference>
<dbReference type="PROSITE" id="PS00180">
    <property type="entry name" value="GLNA_1"/>
    <property type="match status" value="1"/>
</dbReference>
<dbReference type="PROSITE" id="PS00181">
    <property type="entry name" value="GLNA_ATP"/>
    <property type="match status" value="1"/>
</dbReference>
<dbReference type="PROSITE" id="PS51986">
    <property type="entry name" value="GS_BETA_GRASP"/>
    <property type="match status" value="1"/>
</dbReference>
<dbReference type="PROSITE" id="PS51987">
    <property type="entry name" value="GS_CATALYTIC"/>
    <property type="match status" value="1"/>
</dbReference>
<sequence>MATEAAVVSNPNTLAKYLKLDQKGSIMAEYIWIDADGETRSKSRTLKEKEYTPEDLPMWNFDGSSTGQAPGDNSDVYLKPVAVFPDPFRGSPNILVLSECWNADGTPNKYNYRHECAKLMEAHAAHEPWFGLEQEYTLLDLSNRPFGWPANGFPAPQGPYYCGVGTGKVVQRDIVDAHYKACLYSGVKISGTNAEVMPAQWEFQVGPCVGIEMGDHLWLARFLLARIAEEFGAKVSVDPKPIPGDWNGAGLHSNFSTKEMRVEGGMKHIEAAIKKLEGRHKEHIAVYGEGNEKRLTGRHETGAIDQFSYGVANRGASIRIPREYTAKGYGYFEDRRPASNADPYRITGILMETIYGSVDN</sequence>
<organism>
    <name type="scientific">Colletotrichum gloeosporioides</name>
    <name type="common">Anthracnose fungus</name>
    <name type="synonym">Glomerella cingulata</name>
    <dbReference type="NCBI Taxonomy" id="474922"/>
    <lineage>
        <taxon>Eukaryota</taxon>
        <taxon>Fungi</taxon>
        <taxon>Dikarya</taxon>
        <taxon>Ascomycota</taxon>
        <taxon>Pezizomycotina</taxon>
        <taxon>Sordariomycetes</taxon>
        <taxon>Hypocreomycetidae</taxon>
        <taxon>Glomerellales</taxon>
        <taxon>Glomerellaceae</taxon>
        <taxon>Colletotrichum</taxon>
        <taxon>Colletotrichum gloeosporioides species complex</taxon>
    </lineage>
</organism>
<proteinExistence type="inferred from homology"/>
<protein>
    <recommendedName>
        <fullName>Glutamine synthetase</fullName>
        <shortName>GS</shortName>
        <ecNumber>6.3.1.2</ecNumber>
    </recommendedName>
    <alternativeName>
        <fullName>Glutamate--ammonia ligase</fullName>
    </alternativeName>
</protein>
<reference key="1">
    <citation type="submission" date="1996-05" db="EMBL/GenBank/DDBJ databases">
        <title>Glutamine synthetase from Colletotrichum gloeosporioides.</title>
        <authorList>
            <person name="Stevenson S."/>
            <person name="Green J.R."/>
            <person name="Manners J.M."/>
            <person name="Maclean D.J."/>
        </authorList>
    </citation>
    <scope>NUCLEOTIDE SEQUENCE [GENOMIC DNA]</scope>
    <source>
        <strain>UQ62 / Biotype B</strain>
    </source>
</reference>
<evidence type="ECO:0000250" key="1"/>
<evidence type="ECO:0000255" key="2">
    <source>
        <dbReference type="PROSITE-ProRule" id="PRU01330"/>
    </source>
</evidence>
<evidence type="ECO:0000255" key="3">
    <source>
        <dbReference type="PROSITE-ProRule" id="PRU01331"/>
    </source>
</evidence>
<evidence type="ECO:0000305" key="4"/>
<keyword id="KW-0067">ATP-binding</keyword>
<keyword id="KW-0963">Cytoplasm</keyword>
<keyword id="KW-0436">Ligase</keyword>
<keyword id="KW-0547">Nucleotide-binding</keyword>